<accession>Q8R0K9</accession>
<accession>Q8R2X6</accession>
<comment type="function">
    <text evidence="2 3 6">Transcription activator that binds DNA cooperatively with DP proteins through the E2 recognition site, 5'-TTTC[CG]CGC-3' found in the promoter region of a number of genes whose products are involved in cell cycle regulation or in DNA replication. The DRTF1/E2F complex functions in the control of cell-cycle progression from G1 to S phase. E2F4 binds with high affinity to RBL1 and RBL2. In some instances can also bind RB1. Specifically required for multiciliate cell differentiation: together with MCIDAS and E2F5, binds and activate genes required for centriole biogenesis.</text>
</comment>
<comment type="subunit">
    <text evidence="2">Component of the DRTF1/E2F transcription factor complex. Binds cooperatively with TFDP1/Dp-1 to E2F sites. The E2F4/TFDP1 dimer interacts preferentially with pocket protein RBL1, which inhibits the E2F transactivation domain. Lower affinity interaction has been found with retinoblastoma protein RB1. Interacts with TRRAP, which probably mediates its interaction with histone acetyltransferase complexes, leading to transcription activation. Interacts with HCFC1. Component of the DREAM complex (also named LINC complex) at least composed of E2F4, E2F5, LIN9, LIN37, LIN52, LIN54, MYBL1, MYBL2, RBL1, RBL2, RBBP4, TFDP1 and TFDP2. The complex exists in quiescent cells where it represses cell cycle-dependent genes. It dissociates in S phase when LIN9, LIN37, LIN52 and LIN54 form a subcomplex that binds to MYBL2. Interacts with PML. Interacts with CEBPA (when phosphorylated) (By similarity).</text>
</comment>
<comment type="subcellular location">
    <subcellularLocation>
        <location evidence="2">Nucleus</location>
    </subcellularLocation>
</comment>
<comment type="PTM">
    <text evidence="1">Differentially phosphorylated in vivo.</text>
</comment>
<comment type="disruption phenotype">
    <text evidence="6">Postnatal lethality, probably due to the absence of ciliated cells from the entire airway epithelium and the epithelium of the submucosal glands in the paranasal sinuses. In the nasal epithelium, ciliated cells are replaced by columnar secretory cells that produce mucin-like substances. In the proximal lung, reduction in club cells is also observed. The combination of no ciliated cells and excess mucous cells leads for the chronic rhinitis and increased susceptibility to opportunistic infections that cause lethality.</text>
</comment>
<comment type="similarity">
    <text evidence="7">Belongs to the E2F/DP family.</text>
</comment>
<reference key="1">
    <citation type="journal article" date="2005" name="Science">
        <title>The transcriptional landscape of the mammalian genome.</title>
        <authorList>
            <person name="Carninci P."/>
            <person name="Kasukawa T."/>
            <person name="Katayama S."/>
            <person name="Gough J."/>
            <person name="Frith M.C."/>
            <person name="Maeda N."/>
            <person name="Oyama R."/>
            <person name="Ravasi T."/>
            <person name="Lenhard B."/>
            <person name="Wells C."/>
            <person name="Kodzius R."/>
            <person name="Shimokawa K."/>
            <person name="Bajic V.B."/>
            <person name="Brenner S.E."/>
            <person name="Batalov S."/>
            <person name="Forrest A.R."/>
            <person name="Zavolan M."/>
            <person name="Davis M.J."/>
            <person name="Wilming L.G."/>
            <person name="Aidinis V."/>
            <person name="Allen J.E."/>
            <person name="Ambesi-Impiombato A."/>
            <person name="Apweiler R."/>
            <person name="Aturaliya R.N."/>
            <person name="Bailey T.L."/>
            <person name="Bansal M."/>
            <person name="Baxter L."/>
            <person name="Beisel K.W."/>
            <person name="Bersano T."/>
            <person name="Bono H."/>
            <person name="Chalk A.M."/>
            <person name="Chiu K.P."/>
            <person name="Choudhary V."/>
            <person name="Christoffels A."/>
            <person name="Clutterbuck D.R."/>
            <person name="Crowe M.L."/>
            <person name="Dalla E."/>
            <person name="Dalrymple B.P."/>
            <person name="de Bono B."/>
            <person name="Della Gatta G."/>
            <person name="di Bernardo D."/>
            <person name="Down T."/>
            <person name="Engstrom P."/>
            <person name="Fagiolini M."/>
            <person name="Faulkner G."/>
            <person name="Fletcher C.F."/>
            <person name="Fukushima T."/>
            <person name="Furuno M."/>
            <person name="Futaki S."/>
            <person name="Gariboldi M."/>
            <person name="Georgii-Hemming P."/>
            <person name="Gingeras T.R."/>
            <person name="Gojobori T."/>
            <person name="Green R.E."/>
            <person name="Gustincich S."/>
            <person name="Harbers M."/>
            <person name="Hayashi Y."/>
            <person name="Hensch T.K."/>
            <person name="Hirokawa N."/>
            <person name="Hill D."/>
            <person name="Huminiecki L."/>
            <person name="Iacono M."/>
            <person name="Ikeo K."/>
            <person name="Iwama A."/>
            <person name="Ishikawa T."/>
            <person name="Jakt M."/>
            <person name="Kanapin A."/>
            <person name="Katoh M."/>
            <person name="Kawasawa Y."/>
            <person name="Kelso J."/>
            <person name="Kitamura H."/>
            <person name="Kitano H."/>
            <person name="Kollias G."/>
            <person name="Krishnan S.P."/>
            <person name="Kruger A."/>
            <person name="Kummerfeld S.K."/>
            <person name="Kurochkin I.V."/>
            <person name="Lareau L.F."/>
            <person name="Lazarevic D."/>
            <person name="Lipovich L."/>
            <person name="Liu J."/>
            <person name="Liuni S."/>
            <person name="McWilliam S."/>
            <person name="Madan Babu M."/>
            <person name="Madera M."/>
            <person name="Marchionni L."/>
            <person name="Matsuda H."/>
            <person name="Matsuzawa S."/>
            <person name="Miki H."/>
            <person name="Mignone F."/>
            <person name="Miyake S."/>
            <person name="Morris K."/>
            <person name="Mottagui-Tabar S."/>
            <person name="Mulder N."/>
            <person name="Nakano N."/>
            <person name="Nakauchi H."/>
            <person name="Ng P."/>
            <person name="Nilsson R."/>
            <person name="Nishiguchi S."/>
            <person name="Nishikawa S."/>
            <person name="Nori F."/>
            <person name="Ohara O."/>
            <person name="Okazaki Y."/>
            <person name="Orlando V."/>
            <person name="Pang K.C."/>
            <person name="Pavan W.J."/>
            <person name="Pavesi G."/>
            <person name="Pesole G."/>
            <person name="Petrovsky N."/>
            <person name="Piazza S."/>
            <person name="Reed J."/>
            <person name="Reid J.F."/>
            <person name="Ring B.Z."/>
            <person name="Ringwald M."/>
            <person name="Rost B."/>
            <person name="Ruan Y."/>
            <person name="Salzberg S.L."/>
            <person name="Sandelin A."/>
            <person name="Schneider C."/>
            <person name="Schoenbach C."/>
            <person name="Sekiguchi K."/>
            <person name="Semple C.A."/>
            <person name="Seno S."/>
            <person name="Sessa L."/>
            <person name="Sheng Y."/>
            <person name="Shibata Y."/>
            <person name="Shimada H."/>
            <person name="Shimada K."/>
            <person name="Silva D."/>
            <person name="Sinclair B."/>
            <person name="Sperling S."/>
            <person name="Stupka E."/>
            <person name="Sugiura K."/>
            <person name="Sultana R."/>
            <person name="Takenaka Y."/>
            <person name="Taki K."/>
            <person name="Tammoja K."/>
            <person name="Tan S.L."/>
            <person name="Tang S."/>
            <person name="Taylor M.S."/>
            <person name="Tegner J."/>
            <person name="Teichmann S.A."/>
            <person name="Ueda H.R."/>
            <person name="van Nimwegen E."/>
            <person name="Verardo R."/>
            <person name="Wei C.L."/>
            <person name="Yagi K."/>
            <person name="Yamanishi H."/>
            <person name="Zabarovsky E."/>
            <person name="Zhu S."/>
            <person name="Zimmer A."/>
            <person name="Hide W."/>
            <person name="Bult C."/>
            <person name="Grimmond S.M."/>
            <person name="Teasdale R.D."/>
            <person name="Liu E.T."/>
            <person name="Brusic V."/>
            <person name="Quackenbush J."/>
            <person name="Wahlestedt C."/>
            <person name="Mattick J.S."/>
            <person name="Hume D.A."/>
            <person name="Kai C."/>
            <person name="Sasaki D."/>
            <person name="Tomaru Y."/>
            <person name="Fukuda S."/>
            <person name="Kanamori-Katayama M."/>
            <person name="Suzuki M."/>
            <person name="Aoki J."/>
            <person name="Arakawa T."/>
            <person name="Iida J."/>
            <person name="Imamura K."/>
            <person name="Itoh M."/>
            <person name="Kato T."/>
            <person name="Kawaji H."/>
            <person name="Kawagashira N."/>
            <person name="Kawashima T."/>
            <person name="Kojima M."/>
            <person name="Kondo S."/>
            <person name="Konno H."/>
            <person name="Nakano K."/>
            <person name="Ninomiya N."/>
            <person name="Nishio T."/>
            <person name="Okada M."/>
            <person name="Plessy C."/>
            <person name="Shibata K."/>
            <person name="Shiraki T."/>
            <person name="Suzuki S."/>
            <person name="Tagami M."/>
            <person name="Waki K."/>
            <person name="Watahiki A."/>
            <person name="Okamura-Oho Y."/>
            <person name="Suzuki H."/>
            <person name="Kawai J."/>
            <person name="Hayashizaki Y."/>
        </authorList>
    </citation>
    <scope>NUCLEOTIDE SEQUENCE [LARGE SCALE MRNA]</scope>
    <source>
        <strain>C57BL/6J</strain>
        <strain>NOD</strain>
        <tissue>Liver</tissue>
        <tissue>Spleen</tissue>
    </source>
</reference>
<reference key="2">
    <citation type="journal article" date="2004" name="Genome Res.">
        <title>The status, quality, and expansion of the NIH full-length cDNA project: the Mammalian Gene Collection (MGC).</title>
        <authorList>
            <consortium name="The MGC Project Team"/>
        </authorList>
    </citation>
    <scope>NUCLEOTIDE SEQUENCE [LARGE SCALE MRNA]</scope>
    <source>
        <strain>Czech II</strain>
        <strain>FVB/N</strain>
        <tissue>Colon</tissue>
        <tissue>Mammary tumor</tissue>
    </source>
</reference>
<reference key="3">
    <citation type="journal article" date="2007" name="Dev. Biol.">
        <title>E2f4 is required for normal development of the airway epithelium.</title>
        <authorList>
            <person name="Danielian P.S."/>
            <person name="Bender Kim C.F."/>
            <person name="Caron A.M."/>
            <person name="Vasile E."/>
            <person name="Bronson R.T."/>
            <person name="Lees J.A."/>
        </authorList>
    </citation>
    <scope>DISRUPTION PHENOTYPE</scope>
    <scope>FUNCTION</scope>
</reference>
<reference key="4">
    <citation type="journal article" date="2010" name="Cell">
        <title>A tissue-specific atlas of mouse protein phosphorylation and expression.</title>
        <authorList>
            <person name="Huttlin E.L."/>
            <person name="Jedrychowski M.P."/>
            <person name="Elias J.E."/>
            <person name="Goswami T."/>
            <person name="Rad R."/>
            <person name="Beausoleil S.A."/>
            <person name="Villen J."/>
            <person name="Haas W."/>
            <person name="Sowa M.E."/>
            <person name="Gygi S.P."/>
        </authorList>
    </citation>
    <scope>PHOSPHORYLATION [LARGE SCALE ANALYSIS] AT SER-381</scope>
    <scope>IDENTIFICATION BY MASS SPECTROMETRY [LARGE SCALE ANALYSIS]</scope>
    <source>
        <tissue>Brain</tissue>
        <tissue>Kidney</tissue>
        <tissue>Lung</tissue>
        <tissue>Spleen</tissue>
    </source>
</reference>
<gene>
    <name type="primary">E2f4</name>
</gene>
<organism>
    <name type="scientific">Mus musculus</name>
    <name type="common">Mouse</name>
    <dbReference type="NCBI Taxonomy" id="10090"/>
    <lineage>
        <taxon>Eukaryota</taxon>
        <taxon>Metazoa</taxon>
        <taxon>Chordata</taxon>
        <taxon>Craniata</taxon>
        <taxon>Vertebrata</taxon>
        <taxon>Euteleostomi</taxon>
        <taxon>Mammalia</taxon>
        <taxon>Eutheria</taxon>
        <taxon>Euarchontoglires</taxon>
        <taxon>Glires</taxon>
        <taxon>Rodentia</taxon>
        <taxon>Myomorpha</taxon>
        <taxon>Muroidea</taxon>
        <taxon>Muridae</taxon>
        <taxon>Murinae</taxon>
        <taxon>Mus</taxon>
        <taxon>Mus</taxon>
    </lineage>
</organism>
<name>E2F4_MOUSE</name>
<sequence length="410" mass="43833">MAEAGPQAPPPPGTPSRHEKSLGLLTTKFVSLLQEAKDGVLDLKLAADTLAVRQKRRIYDITNVLEGIGLIEKKSKNSIQWKGVGPGCNTREIADKLIELKAEIEELQQREQELDQHKVWVQQSIRNVTEDVQNSCLAYVTHEDICRCFAGDTLLAIRAPSGTSLEVPIPEGLNGQKKYQIHLKSMSGPIEVLLVNKEAWSSPPVAVPVPPPDDLLQSPPAVSTPPPLPKPALAQPQESSPPSSPQLTTPTPVLGSTQVSEVACQTSEIAVSGSPGTENKDSGEVSSLPLGLTALDTRPLQSSALLDSSSSSSSSSSSSSSSSSGPNPSTSFEPIKADPTGVLDLPKELSEIFDPTRECMSSELLEELMSSEVFAPLLRLSPPPGDHDYIYNLDESEGVCDLFDVPVLKL</sequence>
<dbReference type="EMBL" id="AK145950">
    <property type="protein sequence ID" value="BAE26778.1"/>
    <property type="molecule type" value="mRNA"/>
</dbReference>
<dbReference type="EMBL" id="AK157028">
    <property type="protein sequence ID" value="BAE33937.1"/>
    <property type="molecule type" value="mRNA"/>
</dbReference>
<dbReference type="EMBL" id="BC023859">
    <property type="protein sequence ID" value="AAH23859.1"/>
    <property type="molecule type" value="mRNA"/>
</dbReference>
<dbReference type="EMBL" id="BC026649">
    <property type="protein sequence ID" value="AAH26649.1"/>
    <property type="molecule type" value="mRNA"/>
</dbReference>
<dbReference type="EMBL" id="BC027048">
    <property type="protein sequence ID" value="AAH27048.1"/>
    <property type="molecule type" value="mRNA"/>
</dbReference>
<dbReference type="CCDS" id="CCDS40456.1"/>
<dbReference type="RefSeq" id="NP_683754.1">
    <property type="nucleotide sequence ID" value="NM_148952.1"/>
</dbReference>
<dbReference type="SMR" id="Q8R0K9"/>
<dbReference type="BioGRID" id="222608">
    <property type="interactions" value="14"/>
</dbReference>
<dbReference type="FunCoup" id="Q8R0K9">
    <property type="interactions" value="4271"/>
</dbReference>
<dbReference type="IntAct" id="Q8R0K9">
    <property type="interactions" value="10"/>
</dbReference>
<dbReference type="MINT" id="Q8R0K9"/>
<dbReference type="STRING" id="10090.ENSMUSP00000015003"/>
<dbReference type="GlyGen" id="Q8R0K9">
    <property type="glycosylation" value="1 site"/>
</dbReference>
<dbReference type="iPTMnet" id="Q8R0K9"/>
<dbReference type="PhosphoSitePlus" id="Q8R0K9"/>
<dbReference type="PaxDb" id="10090-ENSMUSP00000015003"/>
<dbReference type="PeptideAtlas" id="Q8R0K9"/>
<dbReference type="ProteomicsDB" id="275424"/>
<dbReference type="Pumba" id="Q8R0K9"/>
<dbReference type="Antibodypedia" id="4294">
    <property type="antibodies" value="500 antibodies from 40 providers"/>
</dbReference>
<dbReference type="DNASU" id="104394"/>
<dbReference type="Ensembl" id="ENSMUST00000015003.10">
    <property type="protein sequence ID" value="ENSMUSP00000015003.9"/>
    <property type="gene ID" value="ENSMUSG00000014859.10"/>
</dbReference>
<dbReference type="GeneID" id="104394"/>
<dbReference type="KEGG" id="mmu:104394"/>
<dbReference type="UCSC" id="uc009ncl.1">
    <property type="organism name" value="mouse"/>
</dbReference>
<dbReference type="AGR" id="MGI:103012"/>
<dbReference type="CTD" id="1874"/>
<dbReference type="MGI" id="MGI:103012">
    <property type="gene designation" value="E2f4"/>
</dbReference>
<dbReference type="VEuPathDB" id="HostDB:ENSMUSG00000014859"/>
<dbReference type="eggNOG" id="KOG2577">
    <property type="taxonomic scope" value="Eukaryota"/>
</dbReference>
<dbReference type="GeneTree" id="ENSGT00940000156252"/>
<dbReference type="HOGENOM" id="CLU_032091_2_2_1"/>
<dbReference type="InParanoid" id="Q8R0K9"/>
<dbReference type="OMA" id="RECMNSG"/>
<dbReference type="OrthoDB" id="1743261at2759"/>
<dbReference type="PhylomeDB" id="Q8R0K9"/>
<dbReference type="TreeFam" id="TF105566"/>
<dbReference type="Reactome" id="R-MMU-1538133">
    <property type="pathway name" value="G0 and Early G1"/>
</dbReference>
<dbReference type="Reactome" id="R-MMU-2173796">
    <property type="pathway name" value="SMAD2/SMAD3:SMAD4 heterotrimer regulates transcription"/>
</dbReference>
<dbReference type="Reactome" id="R-MMU-69231">
    <property type="pathway name" value="Cyclin D associated events in G1"/>
</dbReference>
<dbReference type="BioGRID-ORCS" id="104394">
    <property type="hits" value="9 hits in 82 CRISPR screens"/>
</dbReference>
<dbReference type="ChiTaRS" id="E2f4">
    <property type="organism name" value="mouse"/>
</dbReference>
<dbReference type="PRO" id="PR:Q8R0K9"/>
<dbReference type="Proteomes" id="UP000000589">
    <property type="component" value="Chromosome 8"/>
</dbReference>
<dbReference type="RNAct" id="Q8R0K9">
    <property type="molecule type" value="protein"/>
</dbReference>
<dbReference type="Bgee" id="ENSMUSG00000014859">
    <property type="expression patterns" value="Expressed in embryonic post-anal tail and 162 other cell types or tissues"/>
</dbReference>
<dbReference type="GO" id="GO:0000785">
    <property type="term" value="C:chromatin"/>
    <property type="evidence" value="ECO:0000314"/>
    <property type="project" value="BHF-UCL"/>
</dbReference>
<dbReference type="GO" id="GO:0005737">
    <property type="term" value="C:cytoplasm"/>
    <property type="evidence" value="ECO:0000304"/>
    <property type="project" value="MGI"/>
</dbReference>
<dbReference type="GO" id="GO:0005654">
    <property type="term" value="C:nucleoplasm"/>
    <property type="evidence" value="ECO:0000304"/>
    <property type="project" value="Reactome"/>
</dbReference>
<dbReference type="GO" id="GO:0005634">
    <property type="term" value="C:nucleus"/>
    <property type="evidence" value="ECO:0000314"/>
    <property type="project" value="MGI"/>
</dbReference>
<dbReference type="GO" id="GO:0005667">
    <property type="term" value="C:transcription regulator complex"/>
    <property type="evidence" value="ECO:0007669"/>
    <property type="project" value="InterPro"/>
</dbReference>
<dbReference type="GO" id="GO:0003682">
    <property type="term" value="F:chromatin binding"/>
    <property type="evidence" value="ECO:0000314"/>
    <property type="project" value="MGI"/>
</dbReference>
<dbReference type="GO" id="GO:0003677">
    <property type="term" value="F:DNA binding"/>
    <property type="evidence" value="ECO:0000314"/>
    <property type="project" value="MGI"/>
</dbReference>
<dbReference type="GO" id="GO:0001228">
    <property type="term" value="F:DNA-binding transcription activator activity, RNA polymerase II-specific"/>
    <property type="evidence" value="ECO:0007669"/>
    <property type="project" value="Ensembl"/>
</dbReference>
<dbReference type="GO" id="GO:0003700">
    <property type="term" value="F:DNA-binding transcription factor activity"/>
    <property type="evidence" value="ECO:0000314"/>
    <property type="project" value="MGI"/>
</dbReference>
<dbReference type="GO" id="GO:1990841">
    <property type="term" value="F:promoter-specific chromatin binding"/>
    <property type="evidence" value="ECO:0000266"/>
    <property type="project" value="MGI"/>
</dbReference>
<dbReference type="GO" id="GO:0046983">
    <property type="term" value="F:protein dimerization activity"/>
    <property type="evidence" value="ECO:0007669"/>
    <property type="project" value="InterPro"/>
</dbReference>
<dbReference type="GO" id="GO:0019904">
    <property type="term" value="F:protein domain specific binding"/>
    <property type="evidence" value="ECO:0007669"/>
    <property type="project" value="Ensembl"/>
</dbReference>
<dbReference type="GO" id="GO:0000978">
    <property type="term" value="F:RNA polymerase II cis-regulatory region sequence-specific DNA binding"/>
    <property type="evidence" value="ECO:0000314"/>
    <property type="project" value="MGI"/>
</dbReference>
<dbReference type="GO" id="GO:0009887">
    <property type="term" value="P:animal organ morphogenesis"/>
    <property type="evidence" value="ECO:0000315"/>
    <property type="project" value="MGI"/>
</dbReference>
<dbReference type="GO" id="GO:0008015">
    <property type="term" value="P:blood circulation"/>
    <property type="evidence" value="ECO:0000315"/>
    <property type="project" value="MGI"/>
</dbReference>
<dbReference type="GO" id="GO:0006884">
    <property type="term" value="P:cell volume homeostasis"/>
    <property type="evidence" value="ECO:0000315"/>
    <property type="project" value="MGI"/>
</dbReference>
<dbReference type="GO" id="GO:0098534">
    <property type="term" value="P:centriole assembly"/>
    <property type="evidence" value="ECO:0000250"/>
    <property type="project" value="UniProtKB"/>
</dbReference>
<dbReference type="GO" id="GO:0060271">
    <property type="term" value="P:cilium assembly"/>
    <property type="evidence" value="ECO:0000315"/>
    <property type="project" value="MGI"/>
</dbReference>
<dbReference type="GO" id="GO:0002064">
    <property type="term" value="P:epithelial cell development"/>
    <property type="evidence" value="ECO:0000315"/>
    <property type="project" value="MGI"/>
</dbReference>
<dbReference type="GO" id="GO:0044458">
    <property type="term" value="P:motile cilium assembly"/>
    <property type="evidence" value="ECO:0000250"/>
    <property type="project" value="UniProtKB"/>
</dbReference>
<dbReference type="GO" id="GO:1903251">
    <property type="term" value="P:multi-ciliated epithelial cell differentiation"/>
    <property type="evidence" value="ECO:0000250"/>
    <property type="project" value="UniProtKB"/>
</dbReference>
<dbReference type="GO" id="GO:0045944">
    <property type="term" value="P:positive regulation of transcription by RNA polymerase II"/>
    <property type="evidence" value="ECO:0000316"/>
    <property type="project" value="MGI"/>
</dbReference>
<dbReference type="GO" id="GO:0051726">
    <property type="term" value="P:regulation of cell cycle"/>
    <property type="evidence" value="ECO:0000304"/>
    <property type="project" value="MGI"/>
</dbReference>
<dbReference type="GO" id="GO:0042127">
    <property type="term" value="P:regulation of cell population proliferation"/>
    <property type="evidence" value="ECO:0000314"/>
    <property type="project" value="MGI"/>
</dbReference>
<dbReference type="GO" id="GO:0008361">
    <property type="term" value="P:regulation of cell size"/>
    <property type="evidence" value="ECO:0000315"/>
    <property type="project" value="MGI"/>
</dbReference>
<dbReference type="GO" id="GO:0006355">
    <property type="term" value="P:regulation of DNA-templated transcription"/>
    <property type="evidence" value="ECO:0000304"/>
    <property type="project" value="MGI"/>
</dbReference>
<dbReference type="GO" id="GO:0006357">
    <property type="term" value="P:regulation of transcription by RNA polymerase II"/>
    <property type="evidence" value="ECO:0000314"/>
    <property type="project" value="MGI"/>
</dbReference>
<dbReference type="CDD" id="cd14660">
    <property type="entry name" value="E2F_DD"/>
    <property type="match status" value="1"/>
</dbReference>
<dbReference type="FunFam" id="1.10.10.10:FF:000008">
    <property type="entry name" value="E2F transcription factor 1"/>
    <property type="match status" value="1"/>
</dbReference>
<dbReference type="Gene3D" id="6.10.250.540">
    <property type="match status" value="1"/>
</dbReference>
<dbReference type="Gene3D" id="1.10.10.10">
    <property type="entry name" value="Winged helix-like DNA-binding domain superfamily/Winged helix DNA-binding domain"/>
    <property type="match status" value="1"/>
</dbReference>
<dbReference type="InterPro" id="IPR015633">
    <property type="entry name" value="E2F"/>
</dbReference>
<dbReference type="InterPro" id="IPR037241">
    <property type="entry name" value="E2F-DP_heterodim"/>
</dbReference>
<dbReference type="InterPro" id="IPR032198">
    <property type="entry name" value="E2F_CC-MB"/>
</dbReference>
<dbReference type="InterPro" id="IPR003316">
    <property type="entry name" value="E2F_WHTH_DNA-bd_dom"/>
</dbReference>
<dbReference type="InterPro" id="IPR036388">
    <property type="entry name" value="WH-like_DNA-bd_sf"/>
</dbReference>
<dbReference type="InterPro" id="IPR036390">
    <property type="entry name" value="WH_DNA-bd_sf"/>
</dbReference>
<dbReference type="PANTHER" id="PTHR12081">
    <property type="entry name" value="TRANSCRIPTION FACTOR E2F"/>
    <property type="match status" value="1"/>
</dbReference>
<dbReference type="PANTHER" id="PTHR12081:SF42">
    <property type="entry name" value="TRANSCRIPTION FACTOR E2F4"/>
    <property type="match status" value="1"/>
</dbReference>
<dbReference type="Pfam" id="PF16421">
    <property type="entry name" value="E2F_CC-MB"/>
    <property type="match status" value="1"/>
</dbReference>
<dbReference type="Pfam" id="PF02319">
    <property type="entry name" value="E2F_TDP"/>
    <property type="match status" value="1"/>
</dbReference>
<dbReference type="SMART" id="SM01372">
    <property type="entry name" value="E2F_TDP"/>
    <property type="match status" value="1"/>
</dbReference>
<dbReference type="SUPFAM" id="SSF144074">
    <property type="entry name" value="E2F-DP heterodimerization region"/>
    <property type="match status" value="1"/>
</dbReference>
<dbReference type="SUPFAM" id="SSF46785">
    <property type="entry name" value="Winged helix' DNA-binding domain"/>
    <property type="match status" value="1"/>
</dbReference>
<keyword id="KW-0007">Acetylation</keyword>
<keyword id="KW-0010">Activator</keyword>
<keyword id="KW-0131">Cell cycle</keyword>
<keyword id="KW-0970">Cilium biogenesis/degradation</keyword>
<keyword id="KW-0238">DNA-binding</keyword>
<keyword id="KW-0539">Nucleus</keyword>
<keyword id="KW-0597">Phosphoprotein</keyword>
<keyword id="KW-1185">Reference proteome</keyword>
<keyword id="KW-0804">Transcription</keyword>
<keyword id="KW-0805">Transcription regulation</keyword>
<evidence type="ECO:0000250" key="1"/>
<evidence type="ECO:0000250" key="2">
    <source>
        <dbReference type="UniProtKB" id="Q16254"/>
    </source>
</evidence>
<evidence type="ECO:0000250" key="3">
    <source>
        <dbReference type="UniProtKB" id="Q6DE14"/>
    </source>
</evidence>
<evidence type="ECO:0000255" key="4"/>
<evidence type="ECO:0000256" key="5">
    <source>
        <dbReference type="SAM" id="MobiDB-lite"/>
    </source>
</evidence>
<evidence type="ECO:0000269" key="6">
    <source>
    </source>
</evidence>
<evidence type="ECO:0000305" key="7"/>
<evidence type="ECO:0007744" key="8">
    <source>
    </source>
</evidence>
<proteinExistence type="evidence at protein level"/>
<feature type="initiator methionine" description="Removed" evidence="2">
    <location>
        <position position="1"/>
    </location>
</feature>
<feature type="chain" id="PRO_0000322638" description="Transcription factor E2F4">
    <location>
        <begin position="2"/>
        <end position="410"/>
    </location>
</feature>
<feature type="DNA-binding region" evidence="4">
    <location>
        <begin position="16"/>
        <end position="85"/>
    </location>
</feature>
<feature type="region of interest" description="Disordered" evidence="5">
    <location>
        <begin position="1"/>
        <end position="20"/>
    </location>
</feature>
<feature type="region of interest" description="Leucine-zipper">
    <location>
        <begin position="43"/>
        <end position="65"/>
    </location>
</feature>
<feature type="region of interest" description="Dimerization" evidence="4">
    <location>
        <begin position="86"/>
        <end position="181"/>
    </location>
</feature>
<feature type="region of interest" description="Disordered" evidence="5">
    <location>
        <begin position="203"/>
        <end position="258"/>
    </location>
</feature>
<feature type="region of interest" description="Disordered" evidence="5">
    <location>
        <begin position="303"/>
        <end position="341"/>
    </location>
</feature>
<feature type="region of interest" description="Transactivation" evidence="4">
    <location>
        <begin position="334"/>
        <end position="410"/>
    </location>
</feature>
<feature type="region of interest" description="Interaction with RBL1 and RBL2" evidence="4">
    <location>
        <begin position="387"/>
        <end position="404"/>
    </location>
</feature>
<feature type="short sequence motif" description="DEF box" evidence="1">
    <location>
        <begin position="48"/>
        <end position="85"/>
    </location>
</feature>
<feature type="short sequence motif" description="HCFC1-binding-motif (HBM)" evidence="1">
    <location>
        <begin position="386"/>
        <end position="389"/>
    </location>
</feature>
<feature type="compositionally biased region" description="Low complexity" evidence="5">
    <location>
        <begin position="231"/>
        <end position="252"/>
    </location>
</feature>
<feature type="compositionally biased region" description="Low complexity" evidence="5">
    <location>
        <begin position="308"/>
        <end position="324"/>
    </location>
</feature>
<feature type="modified residue" description="N-acetylalanine" evidence="2">
    <location>
        <position position="2"/>
    </location>
</feature>
<feature type="modified residue" description="Phosphoserine" evidence="8">
    <location>
        <position position="381"/>
    </location>
</feature>
<feature type="sequence conflict" description="In Ref. 2; AAH27048." evidence="7" ref="2">
    <original>P</original>
    <variation>T</variation>
    <location>
        <position position="326"/>
    </location>
</feature>
<protein>
    <recommendedName>
        <fullName>Transcription factor E2F4</fullName>
        <shortName>E2F-4</shortName>
    </recommendedName>
</protein>